<protein>
    <recommendedName>
        <fullName evidence="1">UPF0210 protein Cbei_2352</fullName>
    </recommendedName>
</protein>
<organism>
    <name type="scientific">Clostridium beijerinckii (strain ATCC 51743 / NCIMB 8052)</name>
    <name type="common">Clostridium acetobutylicum</name>
    <dbReference type="NCBI Taxonomy" id="290402"/>
    <lineage>
        <taxon>Bacteria</taxon>
        <taxon>Bacillati</taxon>
        <taxon>Bacillota</taxon>
        <taxon>Clostridia</taxon>
        <taxon>Eubacteriales</taxon>
        <taxon>Clostridiaceae</taxon>
        <taxon>Clostridium</taxon>
    </lineage>
</organism>
<evidence type="ECO:0000255" key="1">
    <source>
        <dbReference type="HAMAP-Rule" id="MF_01221"/>
    </source>
</evidence>
<feature type="chain" id="PRO_1000085661" description="UPF0210 protein Cbei_2352">
    <location>
        <begin position="1"/>
        <end position="451"/>
    </location>
</feature>
<comment type="subunit">
    <text evidence="1">Homodimer.</text>
</comment>
<comment type="similarity">
    <text evidence="1">Belongs to the UPF0210 family.</text>
</comment>
<sequence length="451" mass="47314">MNTNNILETIKMIEEEKLDVRTITMGISLLDCIDPDGDKARIKIYDKITKSAEHLVEVGRQIETEFGIPIVNKRVSITPMSIIAGATNETSYVEFARTLDRAAETLGIDFLGGFSALVQKGCTKGDKILISSIPEALAVTKKVCASVNVGCTKSGINMNAVRDMADVIKRTAELTKDQKGFGCAKLVVFANAVEDNPFMAGAFHGVGEAERIINVGVSGPGVVKRALEKVRGASFDVVAETIKQTAFKVTRMGELVANEASRRLDVPFGIVDLSLAPTPAVGDSVAEILEEIGLEQVGTHGTIAALAMLNDAVKKGGVMACSHVGGLSGAFIPVSEDAGMIDAVISGSLNLEKLEGMTCVCSVGLDMIAIPGDTPASTIAGMIADEAAIGVINNKTTAVRIIPAPGCEIGDMVEFGGLLGRAPVMKVNGKSSELFAQRGGRIPAPIHSFKN</sequence>
<proteinExistence type="inferred from homology"/>
<dbReference type="EMBL" id="CP000721">
    <property type="protein sequence ID" value="ABR34512.1"/>
    <property type="molecule type" value="Genomic_DNA"/>
</dbReference>
<dbReference type="RefSeq" id="WP_012058568.1">
    <property type="nucleotide sequence ID" value="NC_009617.1"/>
</dbReference>
<dbReference type="SMR" id="A6LVY2"/>
<dbReference type="KEGG" id="cbe:Cbei_2352"/>
<dbReference type="eggNOG" id="COG2848">
    <property type="taxonomic scope" value="Bacteria"/>
</dbReference>
<dbReference type="HOGENOM" id="CLU_048704_0_0_9"/>
<dbReference type="Proteomes" id="UP000000565">
    <property type="component" value="Chromosome"/>
</dbReference>
<dbReference type="CDD" id="cd08025">
    <property type="entry name" value="RNR_PFL_like_DUF711"/>
    <property type="match status" value="1"/>
</dbReference>
<dbReference type="Gene3D" id="3.20.70.20">
    <property type="match status" value="1"/>
</dbReference>
<dbReference type="HAMAP" id="MF_01221">
    <property type="entry name" value="UPF0210"/>
    <property type="match status" value="1"/>
</dbReference>
<dbReference type="InterPro" id="IPR007841">
    <property type="entry name" value="UPF0210"/>
</dbReference>
<dbReference type="NCBIfam" id="NF003700">
    <property type="entry name" value="PRK05313.1"/>
    <property type="match status" value="1"/>
</dbReference>
<dbReference type="PANTHER" id="PTHR37560:SF1">
    <property type="entry name" value="UPF0210 PROTEIN MJ1665"/>
    <property type="match status" value="1"/>
</dbReference>
<dbReference type="PANTHER" id="PTHR37560">
    <property type="entry name" value="UPF0210 PROTEIN SPR0218"/>
    <property type="match status" value="1"/>
</dbReference>
<dbReference type="Pfam" id="PF05167">
    <property type="entry name" value="DUF711"/>
    <property type="match status" value="1"/>
</dbReference>
<dbReference type="SUPFAM" id="SSF51998">
    <property type="entry name" value="PFL-like glycyl radical enzymes"/>
    <property type="match status" value="1"/>
</dbReference>
<gene>
    <name type="ordered locus">Cbei_2352</name>
</gene>
<accession>A6LVY2</accession>
<reference key="1">
    <citation type="submission" date="2007-06" db="EMBL/GenBank/DDBJ databases">
        <title>Complete sequence of Clostridium beijerinckii NCIMB 8052.</title>
        <authorList>
            <consortium name="US DOE Joint Genome Institute"/>
            <person name="Copeland A."/>
            <person name="Lucas S."/>
            <person name="Lapidus A."/>
            <person name="Barry K."/>
            <person name="Detter J.C."/>
            <person name="Glavina del Rio T."/>
            <person name="Hammon N."/>
            <person name="Israni S."/>
            <person name="Dalin E."/>
            <person name="Tice H."/>
            <person name="Pitluck S."/>
            <person name="Sims D."/>
            <person name="Brettin T."/>
            <person name="Bruce D."/>
            <person name="Tapia R."/>
            <person name="Brainard J."/>
            <person name="Schmutz J."/>
            <person name="Larimer F."/>
            <person name="Land M."/>
            <person name="Hauser L."/>
            <person name="Kyrpides N."/>
            <person name="Mikhailova N."/>
            <person name="Bennet G."/>
            <person name="Cann I."/>
            <person name="Chen J.-S."/>
            <person name="Contreras A.L."/>
            <person name="Jones D."/>
            <person name="Kashket E."/>
            <person name="Mitchell W."/>
            <person name="Stoddard S."/>
            <person name="Schwarz W."/>
            <person name="Qureshi N."/>
            <person name="Young M."/>
            <person name="Shi Z."/>
            <person name="Ezeji T."/>
            <person name="White B."/>
            <person name="Blaschek H."/>
            <person name="Richardson P."/>
        </authorList>
    </citation>
    <scope>NUCLEOTIDE SEQUENCE [LARGE SCALE GENOMIC DNA]</scope>
    <source>
        <strain>ATCC 51743 / NCIMB 8052</strain>
    </source>
</reference>
<name>Y2352_CLOB8</name>